<sequence length="30" mass="3466">FVYGNGVTSILVQAQFLVNGQRRFFYTPDK</sequence>
<protein>
    <recommendedName>
        <fullName evidence="3">Bacteriocin SRCAM 37</fullName>
    </recommendedName>
</protein>
<accession>P86395</accession>
<name>BCN37_PAEPO</name>
<reference evidence="4" key="1">
    <citation type="journal article" date="2005" name="J. Food Prot.">
        <title>Isolation of Bacillus circulans and Paenibacillus polymyxa strains inhibitory to Campylobacter jejuni and characterization of associated bacteriocins.</title>
        <authorList>
            <person name="Svetoch E.A."/>
            <person name="Stern N.J."/>
            <person name="Eruslanov B.V."/>
            <person name="Kovalev Y.N."/>
            <person name="Volodina L.I."/>
            <person name="Perelygin V.V."/>
            <person name="Mitsevich E.V."/>
            <person name="Mitsevich I.P."/>
            <person name="Pokhilenko V.D."/>
            <person name="Borzenkov V.N."/>
            <person name="Levchuk V.P."/>
            <person name="Svetoch O.E."/>
            <person name="Kudriavtseva T.Y."/>
        </authorList>
    </citation>
    <scope>PROTEIN SEQUENCE</scope>
    <scope>FUNCTION</scope>
    <scope>BIOPHYSICOCHEMICAL PROPERTIES</scope>
    <scope>SUBCELLULAR LOCATION</scope>
    <scope>MASS SPECTROMETRY</scope>
    <source>
        <strain evidence="2">NRRL B-30507</strain>
    </source>
</reference>
<feature type="chain" id="PRO_0000390701" description="Bacteriocin SRCAM 37">
    <location>
        <begin position="1"/>
        <end position="30"/>
    </location>
</feature>
<evidence type="ECO:0000255" key="1"/>
<evidence type="ECO:0000269" key="2">
    <source>
    </source>
</evidence>
<evidence type="ECO:0000303" key="3">
    <source>
    </source>
</evidence>
<evidence type="ECO:0000305" key="4"/>
<organism>
    <name type="scientific">Paenibacillus polymyxa</name>
    <name type="common">Bacillus polymyxa</name>
    <dbReference type="NCBI Taxonomy" id="1406"/>
    <lineage>
        <taxon>Bacteria</taxon>
        <taxon>Bacillati</taxon>
        <taxon>Bacillota</taxon>
        <taxon>Bacilli</taxon>
        <taxon>Bacillales</taxon>
        <taxon>Paenibacillaceae</taxon>
        <taxon>Paenibacillus</taxon>
    </lineage>
</organism>
<dbReference type="GO" id="GO:0005576">
    <property type="term" value="C:extracellular region"/>
    <property type="evidence" value="ECO:0007669"/>
    <property type="project" value="UniProtKB-SubCell"/>
</dbReference>
<dbReference type="GO" id="GO:0042742">
    <property type="term" value="P:defense response to bacterium"/>
    <property type="evidence" value="ECO:0007669"/>
    <property type="project" value="UniProtKB-KW"/>
</dbReference>
<dbReference type="GO" id="GO:0031640">
    <property type="term" value="P:killing of cells of another organism"/>
    <property type="evidence" value="ECO:0007669"/>
    <property type="project" value="UniProtKB-KW"/>
</dbReference>
<proteinExistence type="evidence at protein level"/>
<keyword id="KW-0044">Antibiotic</keyword>
<keyword id="KW-0929">Antimicrobial</keyword>
<keyword id="KW-0078">Bacteriocin</keyword>
<keyword id="KW-0903">Direct protein sequencing</keyword>
<keyword id="KW-0964">Secreted</keyword>
<comment type="function">
    <text evidence="2">Bacteriocin with antibacterial activity against C.jejuni.</text>
</comment>
<comment type="biophysicochemical properties">
    <phDependence>
        <text evidence="2">Stable from pH 3.0-9.0, inactivated at pH 10.0.</text>
    </phDependence>
    <temperatureDependence>
        <text evidence="2">Thermostable, activity is retained after incubation at 100 degrees Celsius for 15 minutes.</text>
    </temperatureDependence>
</comment>
<comment type="subcellular location">
    <subcellularLocation>
        <location evidence="2">Secreted</location>
    </subcellularLocation>
</comment>
<comment type="mass spectrometry" mass="3214.0" method="MALDI" evidence="2"/>
<comment type="miscellaneous">
    <text evidence="2">Antimicrobial activity is lost upon treatment with beta-chymotrypsin, proteinase K and papain, but not when treated with lysozyme or lipase.</text>
</comment>
<comment type="similarity">
    <text evidence="1">Belongs to the bacteriocin class IIA/YGNGV family.</text>
</comment>